<keyword id="KW-0687">Ribonucleoprotein</keyword>
<keyword id="KW-0689">Ribosomal protein</keyword>
<keyword id="KW-0694">RNA-binding</keyword>
<keyword id="KW-0699">rRNA-binding</keyword>
<dbReference type="EMBL" id="CP000108">
    <property type="protein sequence ID" value="ABB29092.1"/>
    <property type="molecule type" value="Genomic_DNA"/>
</dbReference>
<dbReference type="SMR" id="Q3API3"/>
<dbReference type="STRING" id="340177.Cag_1841"/>
<dbReference type="KEGG" id="cch:Cag_1841"/>
<dbReference type="eggNOG" id="COG0093">
    <property type="taxonomic scope" value="Bacteria"/>
</dbReference>
<dbReference type="HOGENOM" id="CLU_095071_2_1_10"/>
<dbReference type="OrthoDB" id="9806379at2"/>
<dbReference type="GO" id="GO:0022625">
    <property type="term" value="C:cytosolic large ribosomal subunit"/>
    <property type="evidence" value="ECO:0007669"/>
    <property type="project" value="TreeGrafter"/>
</dbReference>
<dbReference type="GO" id="GO:0070180">
    <property type="term" value="F:large ribosomal subunit rRNA binding"/>
    <property type="evidence" value="ECO:0007669"/>
    <property type="project" value="TreeGrafter"/>
</dbReference>
<dbReference type="GO" id="GO:0003735">
    <property type="term" value="F:structural constituent of ribosome"/>
    <property type="evidence" value="ECO:0007669"/>
    <property type="project" value="InterPro"/>
</dbReference>
<dbReference type="GO" id="GO:0006412">
    <property type="term" value="P:translation"/>
    <property type="evidence" value="ECO:0007669"/>
    <property type="project" value="UniProtKB-UniRule"/>
</dbReference>
<dbReference type="CDD" id="cd00337">
    <property type="entry name" value="Ribosomal_uL14"/>
    <property type="match status" value="1"/>
</dbReference>
<dbReference type="FunFam" id="2.40.150.20:FF:000001">
    <property type="entry name" value="50S ribosomal protein L14"/>
    <property type="match status" value="1"/>
</dbReference>
<dbReference type="Gene3D" id="2.40.150.20">
    <property type="entry name" value="Ribosomal protein L14"/>
    <property type="match status" value="1"/>
</dbReference>
<dbReference type="HAMAP" id="MF_01367">
    <property type="entry name" value="Ribosomal_uL14"/>
    <property type="match status" value="1"/>
</dbReference>
<dbReference type="InterPro" id="IPR000218">
    <property type="entry name" value="Ribosomal_uL14"/>
</dbReference>
<dbReference type="InterPro" id="IPR005745">
    <property type="entry name" value="Ribosomal_uL14_bac-type"/>
</dbReference>
<dbReference type="InterPro" id="IPR019972">
    <property type="entry name" value="Ribosomal_uL14_CS"/>
</dbReference>
<dbReference type="InterPro" id="IPR036853">
    <property type="entry name" value="Ribosomal_uL14_sf"/>
</dbReference>
<dbReference type="NCBIfam" id="TIGR01067">
    <property type="entry name" value="rplN_bact"/>
    <property type="match status" value="1"/>
</dbReference>
<dbReference type="PANTHER" id="PTHR11761">
    <property type="entry name" value="50S/60S RIBOSOMAL PROTEIN L14/L23"/>
    <property type="match status" value="1"/>
</dbReference>
<dbReference type="PANTHER" id="PTHR11761:SF3">
    <property type="entry name" value="LARGE RIBOSOMAL SUBUNIT PROTEIN UL14M"/>
    <property type="match status" value="1"/>
</dbReference>
<dbReference type="Pfam" id="PF00238">
    <property type="entry name" value="Ribosomal_L14"/>
    <property type="match status" value="1"/>
</dbReference>
<dbReference type="SMART" id="SM01374">
    <property type="entry name" value="Ribosomal_L14"/>
    <property type="match status" value="1"/>
</dbReference>
<dbReference type="SUPFAM" id="SSF50193">
    <property type="entry name" value="Ribosomal protein L14"/>
    <property type="match status" value="1"/>
</dbReference>
<dbReference type="PROSITE" id="PS00049">
    <property type="entry name" value="RIBOSOMAL_L14"/>
    <property type="match status" value="1"/>
</dbReference>
<gene>
    <name evidence="1" type="primary">rplN</name>
    <name type="ordered locus">Cag_1841</name>
</gene>
<organism>
    <name type="scientific">Chlorobium chlorochromatii (strain CaD3)</name>
    <dbReference type="NCBI Taxonomy" id="340177"/>
    <lineage>
        <taxon>Bacteria</taxon>
        <taxon>Pseudomonadati</taxon>
        <taxon>Chlorobiota</taxon>
        <taxon>Chlorobiia</taxon>
        <taxon>Chlorobiales</taxon>
        <taxon>Chlorobiaceae</taxon>
        <taxon>Chlorobium/Pelodictyon group</taxon>
        <taxon>Chlorobium</taxon>
    </lineage>
</organism>
<evidence type="ECO:0000255" key="1">
    <source>
        <dbReference type="HAMAP-Rule" id="MF_01367"/>
    </source>
</evidence>
<evidence type="ECO:0000305" key="2"/>
<sequence length="122" mass="13395">MIQKETNLVVADNSGAKKVRCIHVFGGTGRRYASLGDQVIVSVKTAVPGGIVKKKDVCKAVVVRAVKESRRKDGSYIRFDENAVVILNAQGEPRGTRIFGPVARELRDKRYMKIVSLAPEVL</sequence>
<comment type="function">
    <text evidence="1">Binds to 23S rRNA. Forms part of two intersubunit bridges in the 70S ribosome.</text>
</comment>
<comment type="subunit">
    <text evidence="1">Part of the 50S ribosomal subunit. Forms a cluster with proteins L3 and L19. In the 70S ribosome, L14 and L19 interact and together make contacts with the 16S rRNA in bridges B5 and B8.</text>
</comment>
<comment type="similarity">
    <text evidence="1">Belongs to the universal ribosomal protein uL14 family.</text>
</comment>
<reference key="1">
    <citation type="submission" date="2005-08" db="EMBL/GenBank/DDBJ databases">
        <title>Complete sequence of Chlorobium chlorochromatii CaD3.</title>
        <authorList>
            <consortium name="US DOE Joint Genome Institute"/>
            <person name="Copeland A."/>
            <person name="Lucas S."/>
            <person name="Lapidus A."/>
            <person name="Barry K."/>
            <person name="Detter J.C."/>
            <person name="Glavina T."/>
            <person name="Hammon N."/>
            <person name="Israni S."/>
            <person name="Pitluck S."/>
            <person name="Bryant D."/>
            <person name="Schmutz J."/>
            <person name="Larimer F."/>
            <person name="Land M."/>
            <person name="Kyrpides N."/>
            <person name="Ivanova N."/>
            <person name="Richardson P."/>
        </authorList>
    </citation>
    <scope>NUCLEOTIDE SEQUENCE [LARGE SCALE GENOMIC DNA]</scope>
    <source>
        <strain>CaD3</strain>
    </source>
</reference>
<proteinExistence type="inferred from homology"/>
<feature type="chain" id="PRO_0000266468" description="Large ribosomal subunit protein uL14">
    <location>
        <begin position="1"/>
        <end position="122"/>
    </location>
</feature>
<name>RL14_CHLCH</name>
<protein>
    <recommendedName>
        <fullName evidence="1">Large ribosomal subunit protein uL14</fullName>
    </recommendedName>
    <alternativeName>
        <fullName evidence="2">50S ribosomal protein L14</fullName>
    </alternativeName>
</protein>
<accession>Q3API3</accession>